<gene>
    <name evidence="1" type="primary">pptA</name>
    <name type="ordered locus">EcolC_2195</name>
</gene>
<feature type="initiator methionine" description="Removed" evidence="1">
    <location>
        <position position="1"/>
    </location>
</feature>
<feature type="chain" id="PRO_0000348340" description="Tautomerase PptA">
    <location>
        <begin position="2"/>
        <end position="75"/>
    </location>
</feature>
<feature type="active site" description="Proton acceptor; via imino nitrogen" evidence="1">
    <location>
        <position position="2"/>
    </location>
</feature>
<organism>
    <name type="scientific">Escherichia coli (strain ATCC 8739 / DSM 1576 / NBRC 3972 / NCIMB 8545 / WDCM 00012 / Crooks)</name>
    <dbReference type="NCBI Taxonomy" id="481805"/>
    <lineage>
        <taxon>Bacteria</taxon>
        <taxon>Pseudomonadati</taxon>
        <taxon>Pseudomonadota</taxon>
        <taxon>Gammaproteobacteria</taxon>
        <taxon>Enterobacterales</taxon>
        <taxon>Enterobacteriaceae</taxon>
        <taxon>Escherichia</taxon>
    </lineage>
</organism>
<reference key="1">
    <citation type="submission" date="2008-02" db="EMBL/GenBank/DDBJ databases">
        <title>Complete sequence of Escherichia coli C str. ATCC 8739.</title>
        <authorList>
            <person name="Copeland A."/>
            <person name="Lucas S."/>
            <person name="Lapidus A."/>
            <person name="Glavina del Rio T."/>
            <person name="Dalin E."/>
            <person name="Tice H."/>
            <person name="Bruce D."/>
            <person name="Goodwin L."/>
            <person name="Pitluck S."/>
            <person name="Kiss H."/>
            <person name="Brettin T."/>
            <person name="Detter J.C."/>
            <person name="Han C."/>
            <person name="Kuske C.R."/>
            <person name="Schmutz J."/>
            <person name="Larimer F."/>
            <person name="Land M."/>
            <person name="Hauser L."/>
            <person name="Kyrpides N."/>
            <person name="Mikhailova N."/>
            <person name="Ingram L."/>
            <person name="Richardson P."/>
        </authorList>
    </citation>
    <scope>NUCLEOTIDE SEQUENCE [LARGE SCALE GENOMIC DNA]</scope>
    <source>
        <strain>ATCC 8739 / DSM 1576 / NBRC 3972 / NCIMB 8545 / WDCM 00012 / Crooks</strain>
    </source>
</reference>
<accession>B1IRZ6</accession>
<evidence type="ECO:0000255" key="1">
    <source>
        <dbReference type="HAMAP-Rule" id="MF_00718"/>
    </source>
</evidence>
<name>PPTA_ECOLC</name>
<comment type="subunit">
    <text evidence="1">Homodimer.</text>
</comment>
<comment type="subcellular location">
    <subcellularLocation>
        <location evidence="1">Cytoplasm</location>
    </subcellularLocation>
</comment>
<comment type="similarity">
    <text evidence="1">Belongs to the 4-oxalocrotonate tautomerase family. PptA subfamily.</text>
</comment>
<proteinExistence type="inferred from homology"/>
<protein>
    <recommendedName>
        <fullName evidence="1">Tautomerase PptA</fullName>
        <ecNumber evidence="1">5.3.2.-</ecNumber>
    </recommendedName>
</protein>
<keyword id="KW-0963">Cytoplasm</keyword>
<keyword id="KW-0413">Isomerase</keyword>
<sequence length="75" mass="8488">MPHIDIKCFPRELDEQQKAALAADITDVIIRHLNSKDSSISIALQQIQPESWQAIWDAEIAPQMEALIKKPGYSM</sequence>
<dbReference type="EC" id="5.3.2.-" evidence="1"/>
<dbReference type="EMBL" id="CP000946">
    <property type="protein sequence ID" value="ACA77834.1"/>
    <property type="molecule type" value="Genomic_DNA"/>
</dbReference>
<dbReference type="RefSeq" id="WP_001120141.1">
    <property type="nucleotide sequence ID" value="NZ_MTFT01000036.1"/>
</dbReference>
<dbReference type="SMR" id="B1IRZ6"/>
<dbReference type="GeneID" id="75203165"/>
<dbReference type="KEGG" id="ecl:EcolC_2195"/>
<dbReference type="HOGENOM" id="CLU_183611_0_1_6"/>
<dbReference type="GO" id="GO:0005737">
    <property type="term" value="C:cytoplasm"/>
    <property type="evidence" value="ECO:0007669"/>
    <property type="project" value="UniProtKB-SubCell"/>
</dbReference>
<dbReference type="GO" id="GO:0016862">
    <property type="term" value="F:intramolecular oxidoreductase activity, interconverting keto- and enol-groups"/>
    <property type="evidence" value="ECO:0007669"/>
    <property type="project" value="UniProtKB-UniRule"/>
</dbReference>
<dbReference type="Gene3D" id="3.30.429.10">
    <property type="entry name" value="Macrophage Migration Inhibitory Factor"/>
    <property type="match status" value="1"/>
</dbReference>
<dbReference type="HAMAP" id="MF_00718">
    <property type="entry name" value="Tautomerase_PptA"/>
    <property type="match status" value="1"/>
</dbReference>
<dbReference type="InterPro" id="IPR004370">
    <property type="entry name" value="4-OT-like_dom"/>
</dbReference>
<dbReference type="InterPro" id="IPR014347">
    <property type="entry name" value="Tautomerase/MIF_sf"/>
</dbReference>
<dbReference type="InterPro" id="IPR017284">
    <property type="entry name" value="Tautomerase_PptA"/>
</dbReference>
<dbReference type="NCBIfam" id="NF002324">
    <property type="entry name" value="PRK01271.1"/>
    <property type="match status" value="1"/>
</dbReference>
<dbReference type="Pfam" id="PF01361">
    <property type="entry name" value="Tautomerase"/>
    <property type="match status" value="1"/>
</dbReference>
<dbReference type="PIRSF" id="PIRSF037799">
    <property type="entry name" value="Tautomer_YdcE_prd"/>
    <property type="match status" value="1"/>
</dbReference>
<dbReference type="SUPFAM" id="SSF55331">
    <property type="entry name" value="Tautomerase/MIF"/>
    <property type="match status" value="1"/>
</dbReference>